<reference key="1">
    <citation type="journal article" date="2011" name="J. Bacteriol.">
        <title>Complete genome sequence of the plant growth-promoting endophyte Burkholderia phytofirmans strain PsJN.</title>
        <authorList>
            <person name="Weilharter A."/>
            <person name="Mitter B."/>
            <person name="Shin M.V."/>
            <person name="Chain P.S."/>
            <person name="Nowak J."/>
            <person name="Sessitsch A."/>
        </authorList>
    </citation>
    <scope>NUCLEOTIDE SEQUENCE [LARGE SCALE GENOMIC DNA]</scope>
    <source>
        <strain>DSM 17436 / LMG 22146 / PsJN</strain>
    </source>
</reference>
<name>RS9_PARPJ</name>
<accession>B2SYK9</accession>
<sequence length="130" mass="14462">MIGNWNYGTGRRKSAVARVFIKAGKGDIVVNGKPIADYFSRETSLMIVRQPLELTNHGVTFDIKVNVTGGGETGQAGAVRHGITRALMDYDATLKPELSKAGFVTRDAREVERKKVGFHKARRRKQFSKR</sequence>
<protein>
    <recommendedName>
        <fullName evidence="1">Small ribosomal subunit protein uS9</fullName>
    </recommendedName>
    <alternativeName>
        <fullName evidence="2">30S ribosomal protein S9</fullName>
    </alternativeName>
</protein>
<organism>
    <name type="scientific">Paraburkholderia phytofirmans (strain DSM 17436 / LMG 22146 / PsJN)</name>
    <name type="common">Burkholderia phytofirmans</name>
    <dbReference type="NCBI Taxonomy" id="398527"/>
    <lineage>
        <taxon>Bacteria</taxon>
        <taxon>Pseudomonadati</taxon>
        <taxon>Pseudomonadota</taxon>
        <taxon>Betaproteobacteria</taxon>
        <taxon>Burkholderiales</taxon>
        <taxon>Burkholderiaceae</taxon>
        <taxon>Paraburkholderia</taxon>
    </lineage>
</organism>
<proteinExistence type="inferred from homology"/>
<feature type="chain" id="PRO_1000128096" description="Small ribosomal subunit protein uS9">
    <location>
        <begin position="1"/>
        <end position="130"/>
    </location>
</feature>
<gene>
    <name evidence="1" type="primary">rpsI</name>
    <name type="ordered locus">Bphyt_3353</name>
</gene>
<evidence type="ECO:0000255" key="1">
    <source>
        <dbReference type="HAMAP-Rule" id="MF_00532"/>
    </source>
</evidence>
<evidence type="ECO:0000305" key="2"/>
<keyword id="KW-0687">Ribonucleoprotein</keyword>
<keyword id="KW-0689">Ribosomal protein</keyword>
<dbReference type="EMBL" id="CP001052">
    <property type="protein sequence ID" value="ACD17744.1"/>
    <property type="molecule type" value="Genomic_DNA"/>
</dbReference>
<dbReference type="RefSeq" id="WP_011489810.1">
    <property type="nucleotide sequence ID" value="NC_010681.1"/>
</dbReference>
<dbReference type="SMR" id="B2SYK9"/>
<dbReference type="STRING" id="398527.Bphyt_3353"/>
<dbReference type="GeneID" id="97308796"/>
<dbReference type="KEGG" id="bpy:Bphyt_3353"/>
<dbReference type="eggNOG" id="COG0103">
    <property type="taxonomic scope" value="Bacteria"/>
</dbReference>
<dbReference type="HOGENOM" id="CLU_046483_2_1_4"/>
<dbReference type="OrthoDB" id="9803965at2"/>
<dbReference type="Proteomes" id="UP000001739">
    <property type="component" value="Chromosome 1"/>
</dbReference>
<dbReference type="GO" id="GO:0022627">
    <property type="term" value="C:cytosolic small ribosomal subunit"/>
    <property type="evidence" value="ECO:0007669"/>
    <property type="project" value="TreeGrafter"/>
</dbReference>
<dbReference type="GO" id="GO:0003723">
    <property type="term" value="F:RNA binding"/>
    <property type="evidence" value="ECO:0007669"/>
    <property type="project" value="TreeGrafter"/>
</dbReference>
<dbReference type="GO" id="GO:0003735">
    <property type="term" value="F:structural constituent of ribosome"/>
    <property type="evidence" value="ECO:0007669"/>
    <property type="project" value="InterPro"/>
</dbReference>
<dbReference type="GO" id="GO:0006412">
    <property type="term" value="P:translation"/>
    <property type="evidence" value="ECO:0007669"/>
    <property type="project" value="UniProtKB-UniRule"/>
</dbReference>
<dbReference type="FunFam" id="3.30.230.10:FF:000001">
    <property type="entry name" value="30S ribosomal protein S9"/>
    <property type="match status" value="1"/>
</dbReference>
<dbReference type="Gene3D" id="3.30.230.10">
    <property type="match status" value="1"/>
</dbReference>
<dbReference type="HAMAP" id="MF_00532_B">
    <property type="entry name" value="Ribosomal_uS9_B"/>
    <property type="match status" value="1"/>
</dbReference>
<dbReference type="InterPro" id="IPR020568">
    <property type="entry name" value="Ribosomal_Su5_D2-typ_SF"/>
</dbReference>
<dbReference type="InterPro" id="IPR000754">
    <property type="entry name" value="Ribosomal_uS9"/>
</dbReference>
<dbReference type="InterPro" id="IPR023035">
    <property type="entry name" value="Ribosomal_uS9_bac/plastid"/>
</dbReference>
<dbReference type="InterPro" id="IPR020574">
    <property type="entry name" value="Ribosomal_uS9_CS"/>
</dbReference>
<dbReference type="InterPro" id="IPR014721">
    <property type="entry name" value="Ribsml_uS5_D2-typ_fold_subgr"/>
</dbReference>
<dbReference type="NCBIfam" id="NF001099">
    <property type="entry name" value="PRK00132.1"/>
    <property type="match status" value="1"/>
</dbReference>
<dbReference type="PANTHER" id="PTHR21569">
    <property type="entry name" value="RIBOSOMAL PROTEIN S9"/>
    <property type="match status" value="1"/>
</dbReference>
<dbReference type="PANTHER" id="PTHR21569:SF1">
    <property type="entry name" value="SMALL RIBOSOMAL SUBUNIT PROTEIN US9M"/>
    <property type="match status" value="1"/>
</dbReference>
<dbReference type="Pfam" id="PF00380">
    <property type="entry name" value="Ribosomal_S9"/>
    <property type="match status" value="1"/>
</dbReference>
<dbReference type="SUPFAM" id="SSF54211">
    <property type="entry name" value="Ribosomal protein S5 domain 2-like"/>
    <property type="match status" value="1"/>
</dbReference>
<dbReference type="PROSITE" id="PS00360">
    <property type="entry name" value="RIBOSOMAL_S9"/>
    <property type="match status" value="1"/>
</dbReference>
<comment type="similarity">
    <text evidence="1">Belongs to the universal ribosomal protein uS9 family.</text>
</comment>